<reference key="1">
    <citation type="journal article" date="2006" name="Lancet">
        <title>Complete genome sequence of USA300, an epidemic clone of community-acquired meticillin-resistant Staphylococcus aureus.</title>
        <authorList>
            <person name="Diep B.A."/>
            <person name="Gill S.R."/>
            <person name="Chang R.F."/>
            <person name="Phan T.H."/>
            <person name="Chen J.H."/>
            <person name="Davidson M.G."/>
            <person name="Lin F."/>
            <person name="Lin J."/>
            <person name="Carleton H.A."/>
            <person name="Mongodin E.F."/>
            <person name="Sensabaugh G.F."/>
            <person name="Perdreau-Remington F."/>
        </authorList>
    </citation>
    <scope>NUCLEOTIDE SEQUENCE [LARGE SCALE GENOMIC DNA]</scope>
    <source>
        <strain>USA300</strain>
    </source>
</reference>
<feature type="chain" id="PRO_0000251567" description="Large ribosomal subunit protein uL15">
    <location>
        <begin position="1"/>
        <end position="146"/>
    </location>
</feature>
<feature type="region of interest" description="Disordered" evidence="2">
    <location>
        <begin position="1"/>
        <end position="54"/>
    </location>
</feature>
<feature type="compositionally biased region" description="Basic and acidic residues" evidence="2">
    <location>
        <begin position="1"/>
        <end position="18"/>
    </location>
</feature>
<feature type="compositionally biased region" description="Gly residues" evidence="2">
    <location>
        <begin position="42"/>
        <end position="52"/>
    </location>
</feature>
<organism>
    <name type="scientific">Staphylococcus aureus (strain USA300)</name>
    <dbReference type="NCBI Taxonomy" id="367830"/>
    <lineage>
        <taxon>Bacteria</taxon>
        <taxon>Bacillati</taxon>
        <taxon>Bacillota</taxon>
        <taxon>Bacilli</taxon>
        <taxon>Bacillales</taxon>
        <taxon>Staphylococcaceae</taxon>
        <taxon>Staphylococcus</taxon>
    </lineage>
</organism>
<gene>
    <name evidence="1" type="primary">rplO</name>
    <name type="ordered locus">SAUSA300_2185</name>
</gene>
<proteinExistence type="inferred from homology"/>
<name>RL15_STAA3</name>
<evidence type="ECO:0000255" key="1">
    <source>
        <dbReference type="HAMAP-Rule" id="MF_01341"/>
    </source>
</evidence>
<evidence type="ECO:0000256" key="2">
    <source>
        <dbReference type="SAM" id="MobiDB-lite"/>
    </source>
</evidence>
<evidence type="ECO:0000305" key="3"/>
<keyword id="KW-0687">Ribonucleoprotein</keyword>
<keyword id="KW-0689">Ribosomal protein</keyword>
<keyword id="KW-0694">RNA-binding</keyword>
<keyword id="KW-0699">rRNA-binding</keyword>
<dbReference type="EMBL" id="CP000255">
    <property type="protein sequence ID" value="ABD21850.1"/>
    <property type="molecule type" value="Genomic_DNA"/>
</dbReference>
<dbReference type="RefSeq" id="WP_000766074.1">
    <property type="nucleotide sequence ID" value="NZ_CP027476.1"/>
</dbReference>
<dbReference type="SMR" id="Q2FEQ8"/>
<dbReference type="GeneID" id="98346543"/>
<dbReference type="KEGG" id="saa:SAUSA300_2185"/>
<dbReference type="HOGENOM" id="CLU_055188_4_2_9"/>
<dbReference type="OMA" id="WFEGGQM"/>
<dbReference type="Proteomes" id="UP000001939">
    <property type="component" value="Chromosome"/>
</dbReference>
<dbReference type="GO" id="GO:0022625">
    <property type="term" value="C:cytosolic large ribosomal subunit"/>
    <property type="evidence" value="ECO:0007669"/>
    <property type="project" value="TreeGrafter"/>
</dbReference>
<dbReference type="GO" id="GO:0019843">
    <property type="term" value="F:rRNA binding"/>
    <property type="evidence" value="ECO:0007669"/>
    <property type="project" value="UniProtKB-UniRule"/>
</dbReference>
<dbReference type="GO" id="GO:0003735">
    <property type="term" value="F:structural constituent of ribosome"/>
    <property type="evidence" value="ECO:0007669"/>
    <property type="project" value="InterPro"/>
</dbReference>
<dbReference type="GO" id="GO:0006412">
    <property type="term" value="P:translation"/>
    <property type="evidence" value="ECO:0007669"/>
    <property type="project" value="UniProtKB-UniRule"/>
</dbReference>
<dbReference type="FunFam" id="3.100.10.10:FF:000004">
    <property type="entry name" value="50S ribosomal protein L15"/>
    <property type="match status" value="1"/>
</dbReference>
<dbReference type="Gene3D" id="3.100.10.10">
    <property type="match status" value="1"/>
</dbReference>
<dbReference type="HAMAP" id="MF_01341">
    <property type="entry name" value="Ribosomal_uL15"/>
    <property type="match status" value="1"/>
</dbReference>
<dbReference type="InterPro" id="IPR030878">
    <property type="entry name" value="Ribosomal_uL15"/>
</dbReference>
<dbReference type="InterPro" id="IPR021131">
    <property type="entry name" value="Ribosomal_uL15/eL18"/>
</dbReference>
<dbReference type="InterPro" id="IPR036227">
    <property type="entry name" value="Ribosomal_uL15/eL18_sf"/>
</dbReference>
<dbReference type="InterPro" id="IPR005749">
    <property type="entry name" value="Ribosomal_uL15_bac-type"/>
</dbReference>
<dbReference type="InterPro" id="IPR001196">
    <property type="entry name" value="Ribosomal_uL15_CS"/>
</dbReference>
<dbReference type="NCBIfam" id="TIGR01071">
    <property type="entry name" value="rplO_bact"/>
    <property type="match status" value="1"/>
</dbReference>
<dbReference type="PANTHER" id="PTHR12934">
    <property type="entry name" value="50S RIBOSOMAL PROTEIN L15"/>
    <property type="match status" value="1"/>
</dbReference>
<dbReference type="PANTHER" id="PTHR12934:SF11">
    <property type="entry name" value="LARGE RIBOSOMAL SUBUNIT PROTEIN UL15M"/>
    <property type="match status" value="1"/>
</dbReference>
<dbReference type="Pfam" id="PF00828">
    <property type="entry name" value="Ribosomal_L27A"/>
    <property type="match status" value="1"/>
</dbReference>
<dbReference type="SUPFAM" id="SSF52080">
    <property type="entry name" value="Ribosomal proteins L15p and L18e"/>
    <property type="match status" value="1"/>
</dbReference>
<dbReference type="PROSITE" id="PS00475">
    <property type="entry name" value="RIBOSOMAL_L15"/>
    <property type="match status" value="1"/>
</dbReference>
<protein>
    <recommendedName>
        <fullName evidence="1">Large ribosomal subunit protein uL15</fullName>
    </recommendedName>
    <alternativeName>
        <fullName evidence="3">50S ribosomal protein L15</fullName>
    </alternativeName>
</protein>
<accession>Q2FEQ8</accession>
<sequence>MKLHELKPAEGSRKERNRVGRGVATGNGKTSGRGHKGQKARSGGGVRPGFEGGQLPLFRRLPKRGFTNINRKEYAIVNLDQLNKFEDGTEVTPALLVESGVVKNEKSGIKILGNGSLDKKLTVKAHKFSASAAEAIDAKGGAHEVI</sequence>
<comment type="function">
    <text evidence="1">Binds to the 23S rRNA.</text>
</comment>
<comment type="subunit">
    <text evidence="1">Part of the 50S ribosomal subunit.</text>
</comment>
<comment type="similarity">
    <text evidence="1">Belongs to the universal ribosomal protein uL15 family.</text>
</comment>